<proteinExistence type="inferred from homology"/>
<dbReference type="EMBL" id="CP000958">
    <property type="protein sequence ID" value="ACA89508.1"/>
    <property type="molecule type" value="Genomic_DNA"/>
</dbReference>
<dbReference type="RefSeq" id="WP_006477192.1">
    <property type="nucleotide sequence ID" value="NC_010508.1"/>
</dbReference>
<dbReference type="SMR" id="B1JU23"/>
<dbReference type="GeneID" id="93084317"/>
<dbReference type="KEGG" id="bcm:Bcenmc03_0328"/>
<dbReference type="HOGENOM" id="CLU_041575_5_2_4"/>
<dbReference type="Proteomes" id="UP000002169">
    <property type="component" value="Chromosome 1"/>
</dbReference>
<dbReference type="GO" id="GO:1990904">
    <property type="term" value="C:ribonucleoprotein complex"/>
    <property type="evidence" value="ECO:0007669"/>
    <property type="project" value="UniProtKB-KW"/>
</dbReference>
<dbReference type="GO" id="GO:0005840">
    <property type="term" value="C:ribosome"/>
    <property type="evidence" value="ECO:0007669"/>
    <property type="project" value="UniProtKB-KW"/>
</dbReference>
<dbReference type="GO" id="GO:0019843">
    <property type="term" value="F:rRNA binding"/>
    <property type="evidence" value="ECO:0007669"/>
    <property type="project" value="UniProtKB-UniRule"/>
</dbReference>
<dbReference type="GO" id="GO:0003735">
    <property type="term" value="F:structural constituent of ribosome"/>
    <property type="evidence" value="ECO:0007669"/>
    <property type="project" value="InterPro"/>
</dbReference>
<dbReference type="GO" id="GO:0006412">
    <property type="term" value="P:translation"/>
    <property type="evidence" value="ECO:0007669"/>
    <property type="project" value="UniProtKB-UniRule"/>
</dbReference>
<dbReference type="Gene3D" id="3.40.1370.10">
    <property type="match status" value="1"/>
</dbReference>
<dbReference type="HAMAP" id="MF_01328_B">
    <property type="entry name" value="Ribosomal_uL4_B"/>
    <property type="match status" value="1"/>
</dbReference>
<dbReference type="InterPro" id="IPR002136">
    <property type="entry name" value="Ribosomal_uL4"/>
</dbReference>
<dbReference type="InterPro" id="IPR013005">
    <property type="entry name" value="Ribosomal_uL4-like"/>
</dbReference>
<dbReference type="InterPro" id="IPR023574">
    <property type="entry name" value="Ribosomal_uL4_dom_sf"/>
</dbReference>
<dbReference type="NCBIfam" id="TIGR03953">
    <property type="entry name" value="rplD_bact"/>
    <property type="match status" value="1"/>
</dbReference>
<dbReference type="PANTHER" id="PTHR10746">
    <property type="entry name" value="50S RIBOSOMAL PROTEIN L4"/>
    <property type="match status" value="1"/>
</dbReference>
<dbReference type="PANTHER" id="PTHR10746:SF6">
    <property type="entry name" value="LARGE RIBOSOMAL SUBUNIT PROTEIN UL4M"/>
    <property type="match status" value="1"/>
</dbReference>
<dbReference type="Pfam" id="PF00573">
    <property type="entry name" value="Ribosomal_L4"/>
    <property type="match status" value="1"/>
</dbReference>
<dbReference type="SUPFAM" id="SSF52166">
    <property type="entry name" value="Ribosomal protein L4"/>
    <property type="match status" value="1"/>
</dbReference>
<sequence>MELKLLNENGQEGAVVNASDVVFGRDYNEALIHQVVVAYQANARQGNRAQKDREQVKHTTKKPWRQKGTGRARAGMSSSPLWRGGGRIFPNSPEENFSHKVNKKMHRAGLCSIFSQLAREGRLSVVEDIILEAPKTKLLADKFKTMGLDSVLIITDTVDENLYLASRNLPHVAIVEPRYADPLSLIYFKKVLVTKAAVAQIEELLS</sequence>
<accession>B1JU23</accession>
<comment type="function">
    <text evidence="1">One of the primary rRNA binding proteins, this protein initially binds near the 5'-end of the 23S rRNA. It is important during the early stages of 50S assembly. It makes multiple contacts with different domains of the 23S rRNA in the assembled 50S subunit and ribosome.</text>
</comment>
<comment type="function">
    <text evidence="1">Forms part of the polypeptide exit tunnel.</text>
</comment>
<comment type="subunit">
    <text evidence="1">Part of the 50S ribosomal subunit.</text>
</comment>
<comment type="similarity">
    <text evidence="1">Belongs to the universal ribosomal protein uL4 family.</text>
</comment>
<organism>
    <name type="scientific">Burkholderia orbicola (strain MC0-3)</name>
    <dbReference type="NCBI Taxonomy" id="406425"/>
    <lineage>
        <taxon>Bacteria</taxon>
        <taxon>Pseudomonadati</taxon>
        <taxon>Pseudomonadota</taxon>
        <taxon>Betaproteobacteria</taxon>
        <taxon>Burkholderiales</taxon>
        <taxon>Burkholderiaceae</taxon>
        <taxon>Burkholderia</taxon>
        <taxon>Burkholderia cepacia complex</taxon>
        <taxon>Burkholderia orbicola</taxon>
    </lineage>
</organism>
<feature type="chain" id="PRO_1000142090" description="Large ribosomal subunit protein uL4">
    <location>
        <begin position="1"/>
        <end position="206"/>
    </location>
</feature>
<feature type="region of interest" description="Disordered" evidence="2">
    <location>
        <begin position="45"/>
        <end position="78"/>
    </location>
</feature>
<feature type="compositionally biased region" description="Basic residues" evidence="2">
    <location>
        <begin position="58"/>
        <end position="70"/>
    </location>
</feature>
<name>RL4_BURO0</name>
<gene>
    <name evidence="1" type="primary">rplD</name>
    <name type="ordered locus">Bcenmc03_0328</name>
</gene>
<evidence type="ECO:0000255" key="1">
    <source>
        <dbReference type="HAMAP-Rule" id="MF_01328"/>
    </source>
</evidence>
<evidence type="ECO:0000256" key="2">
    <source>
        <dbReference type="SAM" id="MobiDB-lite"/>
    </source>
</evidence>
<evidence type="ECO:0000305" key="3"/>
<reference key="1">
    <citation type="submission" date="2008-02" db="EMBL/GenBank/DDBJ databases">
        <title>Complete sequence of chromosome 1 of Burkholderia cenocepacia MC0-3.</title>
        <authorList>
            <person name="Copeland A."/>
            <person name="Lucas S."/>
            <person name="Lapidus A."/>
            <person name="Barry K."/>
            <person name="Bruce D."/>
            <person name="Goodwin L."/>
            <person name="Glavina del Rio T."/>
            <person name="Dalin E."/>
            <person name="Tice H."/>
            <person name="Pitluck S."/>
            <person name="Chain P."/>
            <person name="Malfatti S."/>
            <person name="Shin M."/>
            <person name="Vergez L."/>
            <person name="Schmutz J."/>
            <person name="Larimer F."/>
            <person name="Land M."/>
            <person name="Hauser L."/>
            <person name="Kyrpides N."/>
            <person name="Mikhailova N."/>
            <person name="Tiedje J."/>
            <person name="Richardson P."/>
        </authorList>
    </citation>
    <scope>NUCLEOTIDE SEQUENCE [LARGE SCALE GENOMIC DNA]</scope>
    <source>
        <strain>MC0-3</strain>
    </source>
</reference>
<protein>
    <recommendedName>
        <fullName evidence="1">Large ribosomal subunit protein uL4</fullName>
    </recommendedName>
    <alternativeName>
        <fullName evidence="3">50S ribosomal protein L4</fullName>
    </alternativeName>
</protein>
<keyword id="KW-0687">Ribonucleoprotein</keyword>
<keyword id="KW-0689">Ribosomal protein</keyword>
<keyword id="KW-0694">RNA-binding</keyword>
<keyword id="KW-0699">rRNA-binding</keyword>